<dbReference type="EMBL" id="CP000746">
    <property type="protein sequence ID" value="ABR75341.1"/>
    <property type="molecule type" value="Genomic_DNA"/>
</dbReference>
<dbReference type="RefSeq" id="WP_012073718.1">
    <property type="nucleotide sequence ID" value="NC_009655.1"/>
</dbReference>
<dbReference type="SMR" id="A6VQU4"/>
<dbReference type="KEGG" id="asu:Asuc_1994"/>
<dbReference type="eggNOG" id="COG1971">
    <property type="taxonomic scope" value="Bacteria"/>
</dbReference>
<dbReference type="HOGENOM" id="CLU_096410_3_0_6"/>
<dbReference type="OrthoDB" id="9811590at2"/>
<dbReference type="Proteomes" id="UP000001114">
    <property type="component" value="Chromosome"/>
</dbReference>
<dbReference type="GO" id="GO:0005886">
    <property type="term" value="C:plasma membrane"/>
    <property type="evidence" value="ECO:0007669"/>
    <property type="project" value="UniProtKB-SubCell"/>
</dbReference>
<dbReference type="GO" id="GO:0005384">
    <property type="term" value="F:manganese ion transmembrane transporter activity"/>
    <property type="evidence" value="ECO:0007669"/>
    <property type="project" value="UniProtKB-UniRule"/>
</dbReference>
<dbReference type="HAMAP" id="MF_01521">
    <property type="entry name" value="MntP_pump"/>
    <property type="match status" value="1"/>
</dbReference>
<dbReference type="InterPro" id="IPR003810">
    <property type="entry name" value="Mntp/YtaF"/>
</dbReference>
<dbReference type="InterPro" id="IPR022929">
    <property type="entry name" value="Put_MntP"/>
</dbReference>
<dbReference type="PANTHER" id="PTHR35529">
    <property type="entry name" value="MANGANESE EFFLUX PUMP MNTP-RELATED"/>
    <property type="match status" value="1"/>
</dbReference>
<dbReference type="PANTHER" id="PTHR35529:SF1">
    <property type="entry name" value="MANGANESE EFFLUX PUMP MNTP-RELATED"/>
    <property type="match status" value="1"/>
</dbReference>
<dbReference type="Pfam" id="PF02659">
    <property type="entry name" value="Mntp"/>
    <property type="match status" value="1"/>
</dbReference>
<comment type="function">
    <text evidence="1">Probably functions as a manganese efflux pump.</text>
</comment>
<comment type="subcellular location">
    <subcellularLocation>
        <location evidence="1">Cell inner membrane</location>
        <topology evidence="1">Multi-pass membrane protein</topology>
    </subcellularLocation>
</comment>
<comment type="similarity">
    <text evidence="1">Belongs to the MntP (TC 9.B.29) family.</text>
</comment>
<feature type="chain" id="PRO_1000073541" description="Putative manganese efflux pump MntP">
    <location>
        <begin position="1"/>
        <end position="187"/>
    </location>
</feature>
<feature type="transmembrane region" description="Helical" evidence="1">
    <location>
        <begin position="3"/>
        <end position="23"/>
    </location>
</feature>
<feature type="transmembrane region" description="Helical" evidence="1">
    <location>
        <begin position="39"/>
        <end position="59"/>
    </location>
</feature>
<feature type="transmembrane region" description="Helical" evidence="1">
    <location>
        <begin position="65"/>
        <end position="85"/>
    </location>
</feature>
<feature type="transmembrane region" description="Helical" evidence="1">
    <location>
        <begin position="106"/>
        <end position="126"/>
    </location>
</feature>
<feature type="transmembrane region" description="Helical" evidence="1">
    <location>
        <begin position="129"/>
        <end position="149"/>
    </location>
</feature>
<feature type="transmembrane region" description="Helical" evidence="1">
    <location>
        <begin position="166"/>
        <end position="186"/>
    </location>
</feature>
<accession>A6VQU4</accession>
<gene>
    <name evidence="1" type="primary">mntP</name>
    <name type="ordered locus">Asuc_1994</name>
</gene>
<protein>
    <recommendedName>
        <fullName evidence="1">Putative manganese efflux pump MntP</fullName>
    </recommendedName>
</protein>
<organism>
    <name type="scientific">Actinobacillus succinogenes (strain ATCC 55618 / DSM 22257 / CCUG 43843 / 130Z)</name>
    <dbReference type="NCBI Taxonomy" id="339671"/>
    <lineage>
        <taxon>Bacteria</taxon>
        <taxon>Pseudomonadati</taxon>
        <taxon>Pseudomonadota</taxon>
        <taxon>Gammaproteobacteria</taxon>
        <taxon>Pasteurellales</taxon>
        <taxon>Pasteurellaceae</taxon>
        <taxon>Actinobacillus</taxon>
    </lineage>
</organism>
<reference key="1">
    <citation type="journal article" date="2010" name="BMC Genomics">
        <title>A genomic perspective on the potential of Actinobacillus succinogenes for industrial succinate production.</title>
        <authorList>
            <person name="McKinlay J.B."/>
            <person name="Laivenieks M."/>
            <person name="Schindler B.D."/>
            <person name="McKinlay A.A."/>
            <person name="Siddaramappa S."/>
            <person name="Challacombe J.F."/>
            <person name="Lowry S.R."/>
            <person name="Clum A."/>
            <person name="Lapidus A.L."/>
            <person name="Burkhart K.B."/>
            <person name="Harkins V."/>
            <person name="Vieille C."/>
        </authorList>
    </citation>
    <scope>NUCLEOTIDE SEQUENCE [LARGE SCALE GENOMIC DNA]</scope>
    <source>
        <strain>ATCC 55618 / DSM 22257 / CCUG 43843 / 130Z</strain>
    </source>
</reference>
<evidence type="ECO:0000255" key="1">
    <source>
        <dbReference type="HAMAP-Rule" id="MF_01521"/>
    </source>
</evidence>
<name>MNTP_ACTSZ</name>
<sequence length="187" mass="20499">MSYYTLWVIAFGLSMDAFAVSVGKGLTLADFCWKFTLKIALCFGLFQACMPLLGYYVGSHFSDYISEFDHWIAFALLCVIGINMIKMSVTNENSDDDPSDFSLRHLTMLGVATSIDALAMGVSFAFLKVNIWTAAAIIGITTTILSLFGVKAGHWLGDRIHKQAELLGGIILIAMGVKVLIEHRVFG</sequence>
<keyword id="KW-0997">Cell inner membrane</keyword>
<keyword id="KW-1003">Cell membrane</keyword>
<keyword id="KW-0406">Ion transport</keyword>
<keyword id="KW-0464">Manganese</keyword>
<keyword id="KW-0472">Membrane</keyword>
<keyword id="KW-1185">Reference proteome</keyword>
<keyword id="KW-0812">Transmembrane</keyword>
<keyword id="KW-1133">Transmembrane helix</keyword>
<keyword id="KW-0813">Transport</keyword>
<proteinExistence type="inferred from homology"/>